<evidence type="ECO:0000255" key="1">
    <source>
        <dbReference type="HAMAP-Rule" id="MF_00161"/>
    </source>
</evidence>
<feature type="chain" id="PRO_0000278079" description="Lipoprotein signal peptidase">
    <location>
        <begin position="1"/>
        <end position="196"/>
    </location>
</feature>
<feature type="transmembrane region" description="Helical" evidence="1">
    <location>
        <begin position="43"/>
        <end position="63"/>
    </location>
</feature>
<feature type="transmembrane region" description="Helical" evidence="1">
    <location>
        <begin position="75"/>
        <end position="95"/>
    </location>
</feature>
<feature type="transmembrane region" description="Helical" evidence="1">
    <location>
        <begin position="97"/>
        <end position="117"/>
    </location>
</feature>
<feature type="transmembrane region" description="Helical" evidence="1">
    <location>
        <begin position="135"/>
        <end position="155"/>
    </location>
</feature>
<feature type="active site" evidence="1">
    <location>
        <position position="126"/>
    </location>
</feature>
<feature type="active site" evidence="1">
    <location>
        <position position="144"/>
    </location>
</feature>
<keyword id="KW-0064">Aspartyl protease</keyword>
<keyword id="KW-0997">Cell inner membrane</keyword>
<keyword id="KW-1003">Cell membrane</keyword>
<keyword id="KW-0378">Hydrolase</keyword>
<keyword id="KW-0472">Membrane</keyword>
<keyword id="KW-0645">Protease</keyword>
<keyword id="KW-0812">Transmembrane</keyword>
<keyword id="KW-1133">Transmembrane helix</keyword>
<dbReference type="EC" id="3.4.23.36" evidence="1"/>
<dbReference type="EMBL" id="AE017197">
    <property type="protein sequence ID" value="AAU03871.1"/>
    <property type="molecule type" value="Genomic_DNA"/>
</dbReference>
<dbReference type="RefSeq" id="WP_011190855.1">
    <property type="nucleotide sequence ID" value="NC_006142.1"/>
</dbReference>
<dbReference type="SMR" id="Q68WX1"/>
<dbReference type="KEGG" id="rty:RT0394"/>
<dbReference type="eggNOG" id="COG0597">
    <property type="taxonomic scope" value="Bacteria"/>
</dbReference>
<dbReference type="HOGENOM" id="CLU_083252_4_3_5"/>
<dbReference type="OrthoDB" id="9810259at2"/>
<dbReference type="UniPathway" id="UPA00665"/>
<dbReference type="Proteomes" id="UP000000604">
    <property type="component" value="Chromosome"/>
</dbReference>
<dbReference type="GO" id="GO:0005886">
    <property type="term" value="C:plasma membrane"/>
    <property type="evidence" value="ECO:0007669"/>
    <property type="project" value="UniProtKB-SubCell"/>
</dbReference>
<dbReference type="GO" id="GO:0004190">
    <property type="term" value="F:aspartic-type endopeptidase activity"/>
    <property type="evidence" value="ECO:0007669"/>
    <property type="project" value="UniProtKB-UniRule"/>
</dbReference>
<dbReference type="GO" id="GO:0006508">
    <property type="term" value="P:proteolysis"/>
    <property type="evidence" value="ECO:0007669"/>
    <property type="project" value="UniProtKB-KW"/>
</dbReference>
<dbReference type="HAMAP" id="MF_00161">
    <property type="entry name" value="LspA"/>
    <property type="match status" value="1"/>
</dbReference>
<dbReference type="InterPro" id="IPR001872">
    <property type="entry name" value="Peptidase_A8"/>
</dbReference>
<dbReference type="NCBIfam" id="TIGR00077">
    <property type="entry name" value="lspA"/>
    <property type="match status" value="1"/>
</dbReference>
<dbReference type="PANTHER" id="PTHR33695">
    <property type="entry name" value="LIPOPROTEIN SIGNAL PEPTIDASE"/>
    <property type="match status" value="1"/>
</dbReference>
<dbReference type="PANTHER" id="PTHR33695:SF1">
    <property type="entry name" value="LIPOPROTEIN SIGNAL PEPTIDASE"/>
    <property type="match status" value="1"/>
</dbReference>
<dbReference type="Pfam" id="PF01252">
    <property type="entry name" value="Peptidase_A8"/>
    <property type="match status" value="1"/>
</dbReference>
<dbReference type="PRINTS" id="PR00781">
    <property type="entry name" value="LIPOSIGPTASE"/>
</dbReference>
<dbReference type="PROSITE" id="PS00855">
    <property type="entry name" value="SPASE_II"/>
    <property type="match status" value="1"/>
</dbReference>
<protein>
    <recommendedName>
        <fullName evidence="1">Lipoprotein signal peptidase</fullName>
        <ecNumber evidence="1">3.4.23.36</ecNumber>
    </recommendedName>
    <alternativeName>
        <fullName evidence="1">Prolipoprotein signal peptidase</fullName>
    </alternativeName>
    <alternativeName>
        <fullName evidence="1">Signal peptidase II</fullName>
        <shortName evidence="1">SPase II</shortName>
    </alternativeName>
</protein>
<name>LSPA_RICTY</name>
<reference key="1">
    <citation type="journal article" date="2004" name="J. Bacteriol.">
        <title>Complete genome sequence of Rickettsia typhi and comparison with sequences of other Rickettsiae.</title>
        <authorList>
            <person name="McLeod M.P."/>
            <person name="Qin X."/>
            <person name="Karpathy S.E."/>
            <person name="Gioia J."/>
            <person name="Highlander S.K."/>
            <person name="Fox G.E."/>
            <person name="McNeill T.Z."/>
            <person name="Jiang H."/>
            <person name="Muzny D."/>
            <person name="Jacob L.S."/>
            <person name="Hawes A.C."/>
            <person name="Sodergren E."/>
            <person name="Gill R."/>
            <person name="Hume J."/>
            <person name="Morgan M."/>
            <person name="Fan G."/>
            <person name="Amin A.G."/>
            <person name="Gibbs R.A."/>
            <person name="Hong C."/>
            <person name="Yu X.-J."/>
            <person name="Walker D.H."/>
            <person name="Weinstock G.M."/>
        </authorList>
    </citation>
    <scope>NUCLEOTIDE SEQUENCE [LARGE SCALE GENOMIC DNA]</scope>
    <source>
        <strain>ATCC VR-144 / Wilmington</strain>
    </source>
</reference>
<accession>Q68WX1</accession>
<comment type="function">
    <text evidence="1">This protein specifically catalyzes the removal of signal peptides from prolipoproteins.</text>
</comment>
<comment type="catalytic activity">
    <reaction evidence="1">
        <text>Release of signal peptides from bacterial membrane prolipoproteins. Hydrolyzes -Xaa-Yaa-Zaa-|-(S,diacylglyceryl)Cys-, in which Xaa is hydrophobic (preferably Leu), and Yaa (Ala or Ser) and Zaa (Gly or Ala) have small, neutral side chains.</text>
        <dbReference type="EC" id="3.4.23.36"/>
    </reaction>
</comment>
<comment type="pathway">
    <text evidence="1">Protein modification; lipoprotein biosynthesis (signal peptide cleavage).</text>
</comment>
<comment type="subcellular location">
    <subcellularLocation>
        <location evidence="1">Cell inner membrane</location>
        <topology evidence="1">Multi-pass membrane protein</topology>
    </subcellularLocation>
</comment>
<comment type="similarity">
    <text evidence="1">Belongs to the peptidase A8 family.</text>
</comment>
<gene>
    <name evidence="1" type="primary">lspA</name>
    <name type="ordered locus">RT0394</name>
</gene>
<proteinExistence type="inferred from homology"/>
<organism>
    <name type="scientific">Rickettsia typhi (strain ATCC VR-144 / Wilmington)</name>
    <dbReference type="NCBI Taxonomy" id="257363"/>
    <lineage>
        <taxon>Bacteria</taxon>
        <taxon>Pseudomonadati</taxon>
        <taxon>Pseudomonadota</taxon>
        <taxon>Alphaproteobacteria</taxon>
        <taxon>Rickettsiales</taxon>
        <taxon>Rickettsiaceae</taxon>
        <taxon>Rickettsieae</taxon>
        <taxon>Rickettsia</taxon>
        <taxon>typhus group</taxon>
    </lineage>
</organism>
<sequence>MISLFKKLYFTFSRSSRIIITLVIIDQLTKWWFINNLRWKPGLMLKVTSILNMVYTWNYGISFGLMREYYQYSNAIFLITNMIIVCYLYHLMICSKTIGSFVGYNFVIGGAIGNLIDRFCRGAVFDFIHFHYRNYSFPVFNLADCFITLGVIILIEDYFSTKKVIEETSKENFDNLQIEAMAAKIRNTDHVSNDKI</sequence>